<organism>
    <name type="scientific">Bacillus subtilis (strain 168)</name>
    <dbReference type="NCBI Taxonomy" id="224308"/>
    <lineage>
        <taxon>Bacteria</taxon>
        <taxon>Bacillati</taxon>
        <taxon>Bacillota</taxon>
        <taxon>Bacilli</taxon>
        <taxon>Bacillales</taxon>
        <taxon>Bacillaceae</taxon>
        <taxon>Bacillus</taxon>
    </lineage>
</organism>
<feature type="chain" id="PRO_0000063239" description="Assimilatory nitrate reductase catalytic subunit">
    <location>
        <begin position="1"/>
        <end position="710"/>
    </location>
</feature>
<feature type="domain" description="4Fe-4S Mo/W bis-MGD-type" evidence="2">
    <location>
        <begin position="19"/>
        <end position="77"/>
    </location>
</feature>
<feature type="binding site" evidence="2">
    <location>
        <position position="26"/>
    </location>
    <ligand>
        <name>[4Fe-4S] cluster</name>
        <dbReference type="ChEBI" id="CHEBI:49883"/>
    </ligand>
</feature>
<feature type="binding site" evidence="2">
    <location>
        <position position="29"/>
    </location>
    <ligand>
        <name>[4Fe-4S] cluster</name>
        <dbReference type="ChEBI" id="CHEBI:49883"/>
    </ligand>
</feature>
<feature type="binding site" evidence="2">
    <location>
        <position position="33"/>
    </location>
    <ligand>
        <name>[4Fe-4S] cluster</name>
        <dbReference type="ChEBI" id="CHEBI:49883"/>
    </ligand>
</feature>
<feature type="binding site" evidence="2">
    <location>
        <position position="63"/>
    </location>
    <ligand>
        <name>[4Fe-4S] cluster</name>
        <dbReference type="ChEBI" id="CHEBI:49883"/>
    </ligand>
</feature>
<feature type="sequence conflict" description="In Ref. 1; BAA08965 and 4; BAA06353." evidence="5" ref="1 4">
    <original>E</original>
    <variation>D</variation>
    <location>
        <position position="391"/>
    </location>
</feature>
<feature type="sequence conflict" description="In Ref. 1; BAA08965 and 4; BAA06353." evidence="5" ref="1 4">
    <original>M</original>
    <variation>V</variation>
    <location>
        <position position="402"/>
    </location>
</feature>
<comment type="function">
    <text>Nitrate reductase is a key enzyme involved in the first step of nitrate assimilation in plants, fungi and bacteria.</text>
</comment>
<comment type="cofactor">
    <cofactor evidence="5">
        <name>[4Fe-4S] cluster</name>
        <dbReference type="ChEBI" id="CHEBI:49883"/>
    </cofactor>
    <text evidence="5">Binds 1 [4Fe-4S] cluster.</text>
</comment>
<comment type="cofactor">
    <cofactor evidence="1">
        <name>Mo-bis(molybdopterin guanine dinucleotide)</name>
        <dbReference type="ChEBI" id="CHEBI:60539"/>
    </cofactor>
    <text evidence="1">Binds 1 molybdenum-bis(molybdopterin guanine dinucleotide) (Mo-bis-MGD) cofactor per subunit.</text>
</comment>
<comment type="pathway">
    <text>Nitrogen metabolism; nitrate reduction (denitrification); dinitrogen from nitrate: step 1/4.</text>
</comment>
<comment type="induction">
    <text evidence="3 4">Positively regulated by TnrA under nitrogen-limited conditions.</text>
</comment>
<comment type="similarity">
    <text evidence="5">Belongs to the prokaryotic molybdopterin-containing oxidoreductase family.</text>
</comment>
<sequence>MTERLLRYFRDKQQDVQSEKTYDTQCPFCSMQCKMQLVEQTIVTRKKYTAIGIDNPTTQGRLCIKGMNAHQHALNSSRITRPLLKKNGEFMPVSWEEALNHIKDQVTMIQTEHGHDAMAVYGSASITNEEAYLLGKFARVGLQTKYIDYNGRLCMSAAATAANQTFGADRGLTNPLSDIPHTRVIILAGTNIAECQPTIMPYFEKAKENGAYFIAIDPRETATTKIADLHLKIKPGTDAALANGLVKIIIDEQLINEDFIQSRTNGFEELKQHTDSLDLNDIAEQTSVSLVDIRKAAVKFAKETSGMLFTARGIEQQTDGTAAVKGFLNMVLITGKIGKPYSGYGAITGQGNGQGAREHGQKADQLPGYRSIENEEHRAHIAKVWGIHQDELPRKGVSAYEMMEKINDGDIKGLFLMCSNPAVSSPNANLVKKALRRLTFFVAIDLFISETAKYADVILPASSYLEDEGTMTNVEGRVTLREASRPCPGEAKHDWQIICDLASALGKGRYFSYTSAEDIFNELREASRGGIADYSGISYGRLRREGGIHWPCPESDHPGTGRLFTESFAHPDQKAALSVIPNEPPVPKEKPTADYPLYLTTGRVMSHYLTGVQTRKSAALAARHFESFMEIHPQTAATYNIEDRVLVKIESPRGSITVRSKLSEQIRKDTVFVPIHWADAQNVNDLIGEALDPACKMPGFKVCAVRIIPI</sequence>
<reference key="1">
    <citation type="journal article" date="1996" name="Microbiology">
        <title>The 25 degrees-36 degrees region of the Bacillus subtilis chromosome: determination of the sequence of a 146 kb segment and identification of 113 genes.</title>
        <authorList>
            <person name="Yamane K."/>
            <person name="Kumano M."/>
            <person name="Kurita K."/>
        </authorList>
    </citation>
    <scope>NUCLEOTIDE SEQUENCE [GENOMIC DNA]</scope>
    <source>
        <strain>168</strain>
    </source>
</reference>
<reference key="2">
    <citation type="journal article" date="1997" name="Nature">
        <title>The complete genome sequence of the Gram-positive bacterium Bacillus subtilis.</title>
        <authorList>
            <person name="Kunst F."/>
            <person name="Ogasawara N."/>
            <person name="Moszer I."/>
            <person name="Albertini A.M."/>
            <person name="Alloni G."/>
            <person name="Azevedo V."/>
            <person name="Bertero M.G."/>
            <person name="Bessieres P."/>
            <person name="Bolotin A."/>
            <person name="Borchert S."/>
            <person name="Borriss R."/>
            <person name="Boursier L."/>
            <person name="Brans A."/>
            <person name="Braun M."/>
            <person name="Brignell S.C."/>
            <person name="Bron S."/>
            <person name="Brouillet S."/>
            <person name="Bruschi C.V."/>
            <person name="Caldwell B."/>
            <person name="Capuano V."/>
            <person name="Carter N.M."/>
            <person name="Choi S.-K."/>
            <person name="Codani J.-J."/>
            <person name="Connerton I.F."/>
            <person name="Cummings N.J."/>
            <person name="Daniel R.A."/>
            <person name="Denizot F."/>
            <person name="Devine K.M."/>
            <person name="Duesterhoeft A."/>
            <person name="Ehrlich S.D."/>
            <person name="Emmerson P.T."/>
            <person name="Entian K.-D."/>
            <person name="Errington J."/>
            <person name="Fabret C."/>
            <person name="Ferrari E."/>
            <person name="Foulger D."/>
            <person name="Fritz C."/>
            <person name="Fujita M."/>
            <person name="Fujita Y."/>
            <person name="Fuma S."/>
            <person name="Galizzi A."/>
            <person name="Galleron N."/>
            <person name="Ghim S.-Y."/>
            <person name="Glaser P."/>
            <person name="Goffeau A."/>
            <person name="Golightly E.J."/>
            <person name="Grandi G."/>
            <person name="Guiseppi G."/>
            <person name="Guy B.J."/>
            <person name="Haga K."/>
            <person name="Haiech J."/>
            <person name="Harwood C.R."/>
            <person name="Henaut A."/>
            <person name="Hilbert H."/>
            <person name="Holsappel S."/>
            <person name="Hosono S."/>
            <person name="Hullo M.-F."/>
            <person name="Itaya M."/>
            <person name="Jones L.-M."/>
            <person name="Joris B."/>
            <person name="Karamata D."/>
            <person name="Kasahara Y."/>
            <person name="Klaerr-Blanchard M."/>
            <person name="Klein C."/>
            <person name="Kobayashi Y."/>
            <person name="Koetter P."/>
            <person name="Koningstein G."/>
            <person name="Krogh S."/>
            <person name="Kumano M."/>
            <person name="Kurita K."/>
            <person name="Lapidus A."/>
            <person name="Lardinois S."/>
            <person name="Lauber J."/>
            <person name="Lazarevic V."/>
            <person name="Lee S.-M."/>
            <person name="Levine A."/>
            <person name="Liu H."/>
            <person name="Masuda S."/>
            <person name="Mauel C."/>
            <person name="Medigue C."/>
            <person name="Medina N."/>
            <person name="Mellado R.P."/>
            <person name="Mizuno M."/>
            <person name="Moestl D."/>
            <person name="Nakai S."/>
            <person name="Noback M."/>
            <person name="Noone D."/>
            <person name="O'Reilly M."/>
            <person name="Ogawa K."/>
            <person name="Ogiwara A."/>
            <person name="Oudega B."/>
            <person name="Park S.-H."/>
            <person name="Parro V."/>
            <person name="Pohl T.M."/>
            <person name="Portetelle D."/>
            <person name="Porwollik S."/>
            <person name="Prescott A.M."/>
            <person name="Presecan E."/>
            <person name="Pujic P."/>
            <person name="Purnelle B."/>
            <person name="Rapoport G."/>
            <person name="Rey M."/>
            <person name="Reynolds S."/>
            <person name="Rieger M."/>
            <person name="Rivolta C."/>
            <person name="Rocha E."/>
            <person name="Roche B."/>
            <person name="Rose M."/>
            <person name="Sadaie Y."/>
            <person name="Sato T."/>
            <person name="Scanlan E."/>
            <person name="Schleich S."/>
            <person name="Schroeter R."/>
            <person name="Scoffone F."/>
            <person name="Sekiguchi J."/>
            <person name="Sekowska A."/>
            <person name="Seror S.J."/>
            <person name="Serror P."/>
            <person name="Shin B.-S."/>
            <person name="Soldo B."/>
            <person name="Sorokin A."/>
            <person name="Tacconi E."/>
            <person name="Takagi T."/>
            <person name="Takahashi H."/>
            <person name="Takemaru K."/>
            <person name="Takeuchi M."/>
            <person name="Tamakoshi A."/>
            <person name="Tanaka T."/>
            <person name="Terpstra P."/>
            <person name="Tognoni A."/>
            <person name="Tosato V."/>
            <person name="Uchiyama S."/>
            <person name="Vandenbol M."/>
            <person name="Vannier F."/>
            <person name="Vassarotti A."/>
            <person name="Viari A."/>
            <person name="Wambutt R."/>
            <person name="Wedler E."/>
            <person name="Wedler H."/>
            <person name="Weitzenegger T."/>
            <person name="Winters P."/>
            <person name="Wipat A."/>
            <person name="Yamamoto H."/>
            <person name="Yamane K."/>
            <person name="Yasumoto K."/>
            <person name="Yata K."/>
            <person name="Yoshida K."/>
            <person name="Yoshikawa H.-F."/>
            <person name="Zumstein E."/>
            <person name="Yoshikawa H."/>
            <person name="Danchin A."/>
        </authorList>
    </citation>
    <scope>NUCLEOTIDE SEQUENCE [LARGE SCALE GENOMIC DNA]</scope>
    <source>
        <strain>168</strain>
    </source>
</reference>
<reference key="3">
    <citation type="journal article" date="2009" name="Microbiology">
        <title>From a consortium sequence to a unified sequence: the Bacillus subtilis 168 reference genome a decade later.</title>
        <authorList>
            <person name="Barbe V."/>
            <person name="Cruveiller S."/>
            <person name="Kunst F."/>
            <person name="Lenoble P."/>
            <person name="Meurice G."/>
            <person name="Sekowska A."/>
            <person name="Vallenet D."/>
            <person name="Wang T."/>
            <person name="Moszer I."/>
            <person name="Medigue C."/>
            <person name="Danchin A."/>
        </authorList>
    </citation>
    <scope>SEQUENCE REVISION TO 391 AND 402</scope>
</reference>
<reference key="4">
    <citation type="journal article" date="1995" name="J. Bacteriol.">
        <title>The nasB operon and nasA gene are required for nitrate/nitrite assimilation in Bacillus subtilis.</title>
        <authorList>
            <person name="Ogawa K."/>
            <person name="Akagawa E."/>
            <person name="Yamane K."/>
            <person name="Sun Z.-W."/>
            <person name="Lacelle M."/>
            <person name="Zuber P."/>
            <person name="Nakano M.M."/>
        </authorList>
    </citation>
    <scope>NUCLEOTIDE SEQUENCE [GENOMIC DNA] OF 35-710</scope>
    <source>
        <strain>168</strain>
    </source>
</reference>
<reference key="5">
    <citation type="journal article" date="2000" name="J. Mol. Biol.">
        <title>Purification and in vitro activities of the Bacillus subtilis TnrA transcription factor.</title>
        <authorList>
            <person name="Wray L.V. Jr."/>
            <person name="Zalieckas J.M."/>
            <person name="Fisher S.H."/>
        </authorList>
    </citation>
    <scope>INDUCTION BY TNRA</scope>
    <source>
        <strain>168</strain>
    </source>
</reference>
<reference key="6">
    <citation type="journal article" date="2003" name="Mol. Microbiol.">
        <title>Identification of additional TnrA-regulated genes of Bacillus subtilis associated with a TnrA box.</title>
        <authorList>
            <person name="Yoshida K."/>
            <person name="Yamaguchi H."/>
            <person name="Kinehara M."/>
            <person name="Ohki Y.-H."/>
            <person name="Nakaura Y."/>
            <person name="Fujita Y."/>
        </authorList>
    </citation>
    <scope>INDUCTION BY TNRA</scope>
</reference>
<gene>
    <name type="primary">nasC</name>
    <name type="synonym">narB</name>
    <name type="synonym">nasBB</name>
    <name type="ordered locus">BSU03310</name>
</gene>
<keyword id="KW-0004">4Fe-4S</keyword>
<keyword id="KW-0408">Iron</keyword>
<keyword id="KW-0411">Iron-sulfur</keyword>
<keyword id="KW-0479">Metal-binding</keyword>
<keyword id="KW-0500">Molybdenum</keyword>
<keyword id="KW-0534">Nitrate assimilation</keyword>
<keyword id="KW-0560">Oxidoreductase</keyword>
<keyword id="KW-1185">Reference proteome</keyword>
<protein>
    <recommendedName>
        <fullName>Assimilatory nitrate reductase catalytic subunit</fullName>
        <ecNumber>1.7.-.-</ecNumber>
    </recommendedName>
</protein>
<dbReference type="EC" id="1.7.-.-"/>
<dbReference type="EMBL" id="D50453">
    <property type="protein sequence ID" value="BAA08965.1"/>
    <property type="molecule type" value="Genomic_DNA"/>
</dbReference>
<dbReference type="EMBL" id="AL009126">
    <property type="protein sequence ID" value="CAB12125.2"/>
    <property type="molecule type" value="Genomic_DNA"/>
</dbReference>
<dbReference type="EMBL" id="D30689">
    <property type="protein sequence ID" value="BAA06353.1"/>
    <property type="molecule type" value="Genomic_DNA"/>
</dbReference>
<dbReference type="PIR" id="E69665">
    <property type="entry name" value="E69665"/>
</dbReference>
<dbReference type="RefSeq" id="NP_388213.2">
    <property type="nucleotide sequence ID" value="NC_000964.3"/>
</dbReference>
<dbReference type="RefSeq" id="WP_003246484.1">
    <property type="nucleotide sequence ID" value="NZ_OZ025638.1"/>
</dbReference>
<dbReference type="SMR" id="P42434"/>
<dbReference type="FunCoup" id="P42434">
    <property type="interactions" value="664"/>
</dbReference>
<dbReference type="STRING" id="224308.BSU03310"/>
<dbReference type="PaxDb" id="224308-BSU03310"/>
<dbReference type="EnsemblBacteria" id="CAB12125">
    <property type="protein sequence ID" value="CAB12125"/>
    <property type="gene ID" value="BSU_03310"/>
</dbReference>
<dbReference type="GeneID" id="938321"/>
<dbReference type="KEGG" id="bsu:BSU03310"/>
<dbReference type="PATRIC" id="fig|224308.179.peg.345"/>
<dbReference type="eggNOG" id="COG0243">
    <property type="taxonomic scope" value="Bacteria"/>
</dbReference>
<dbReference type="InParanoid" id="P42434"/>
<dbReference type="OrthoDB" id="9805142at2"/>
<dbReference type="PhylomeDB" id="P42434"/>
<dbReference type="BioCyc" id="BSUB:BSU03310-MONOMER"/>
<dbReference type="UniPathway" id="UPA00652">
    <property type="reaction ID" value="UER00706"/>
</dbReference>
<dbReference type="Proteomes" id="UP000001570">
    <property type="component" value="Chromosome"/>
</dbReference>
<dbReference type="GO" id="GO:0051539">
    <property type="term" value="F:4 iron, 4 sulfur cluster binding"/>
    <property type="evidence" value="ECO:0007669"/>
    <property type="project" value="UniProtKB-KW"/>
</dbReference>
<dbReference type="GO" id="GO:0046872">
    <property type="term" value="F:metal ion binding"/>
    <property type="evidence" value="ECO:0007669"/>
    <property type="project" value="UniProtKB-KW"/>
</dbReference>
<dbReference type="GO" id="GO:0043546">
    <property type="term" value="F:molybdopterin cofactor binding"/>
    <property type="evidence" value="ECO:0007669"/>
    <property type="project" value="InterPro"/>
</dbReference>
<dbReference type="GO" id="GO:0016491">
    <property type="term" value="F:oxidoreductase activity"/>
    <property type="evidence" value="ECO:0007669"/>
    <property type="project" value="UniProtKB-KW"/>
</dbReference>
<dbReference type="GO" id="GO:0019333">
    <property type="term" value="P:denitrification pathway"/>
    <property type="evidence" value="ECO:0007669"/>
    <property type="project" value="UniProtKB-UniPathway"/>
</dbReference>
<dbReference type="GO" id="GO:0042128">
    <property type="term" value="P:nitrate assimilation"/>
    <property type="evidence" value="ECO:0007669"/>
    <property type="project" value="UniProtKB-KW"/>
</dbReference>
<dbReference type="CDD" id="cd00508">
    <property type="entry name" value="MopB_CT_Fdh-Nap-like"/>
    <property type="match status" value="1"/>
</dbReference>
<dbReference type="CDD" id="cd02754">
    <property type="entry name" value="MopB_Nitrate-R-NapA-like"/>
    <property type="match status" value="1"/>
</dbReference>
<dbReference type="Gene3D" id="2.40.40.20">
    <property type="match status" value="1"/>
</dbReference>
<dbReference type="Gene3D" id="3.40.50.740">
    <property type="match status" value="1"/>
</dbReference>
<dbReference type="Gene3D" id="2.20.25.90">
    <property type="entry name" value="ADC-like domains"/>
    <property type="match status" value="1"/>
</dbReference>
<dbReference type="Gene3D" id="3.40.228.10">
    <property type="entry name" value="Dimethylsulfoxide Reductase, domain 2"/>
    <property type="match status" value="1"/>
</dbReference>
<dbReference type="InterPro" id="IPR009010">
    <property type="entry name" value="Asp_de-COase-like_dom_sf"/>
</dbReference>
<dbReference type="InterPro" id="IPR006657">
    <property type="entry name" value="MoPterin_dinucl-bd_dom"/>
</dbReference>
<dbReference type="InterPro" id="IPR006656">
    <property type="entry name" value="Mopterin_OxRdtase"/>
</dbReference>
<dbReference type="InterPro" id="IPR006963">
    <property type="entry name" value="Mopterin_OxRdtase_4Fe-4S_dom"/>
</dbReference>
<dbReference type="InterPro" id="IPR006655">
    <property type="entry name" value="Mopterin_OxRdtase_prok_CS"/>
</dbReference>
<dbReference type="InterPro" id="IPR027467">
    <property type="entry name" value="MopterinOxRdtase_cofactor_BS"/>
</dbReference>
<dbReference type="InterPro" id="IPR050123">
    <property type="entry name" value="Prok_molybdopt-oxidoreductase"/>
</dbReference>
<dbReference type="NCBIfam" id="NF047855">
    <property type="entry name" value="AssmNtatRedNasC"/>
    <property type="match status" value="1"/>
</dbReference>
<dbReference type="PANTHER" id="PTHR43105:SF10">
    <property type="entry name" value="NADH-QUINONE OXIDOREDUCTASE SUBUNIT G"/>
    <property type="match status" value="1"/>
</dbReference>
<dbReference type="PANTHER" id="PTHR43105">
    <property type="entry name" value="RESPIRATORY NITRATE REDUCTASE"/>
    <property type="match status" value="1"/>
</dbReference>
<dbReference type="Pfam" id="PF04879">
    <property type="entry name" value="Molybdop_Fe4S4"/>
    <property type="match status" value="1"/>
</dbReference>
<dbReference type="Pfam" id="PF00384">
    <property type="entry name" value="Molybdopterin"/>
    <property type="match status" value="1"/>
</dbReference>
<dbReference type="Pfam" id="PF01568">
    <property type="entry name" value="Molydop_binding"/>
    <property type="match status" value="1"/>
</dbReference>
<dbReference type="SMART" id="SM00926">
    <property type="entry name" value="Molybdop_Fe4S4"/>
    <property type="match status" value="1"/>
</dbReference>
<dbReference type="SUPFAM" id="SSF50692">
    <property type="entry name" value="ADC-like"/>
    <property type="match status" value="1"/>
</dbReference>
<dbReference type="SUPFAM" id="SSF53706">
    <property type="entry name" value="Formate dehydrogenase/DMSO reductase, domains 1-3"/>
    <property type="match status" value="1"/>
</dbReference>
<dbReference type="PROSITE" id="PS51669">
    <property type="entry name" value="4FE4S_MOW_BIS_MGD"/>
    <property type="match status" value="1"/>
</dbReference>
<dbReference type="PROSITE" id="PS00551">
    <property type="entry name" value="MOLYBDOPTERIN_PROK_1"/>
    <property type="match status" value="1"/>
</dbReference>
<dbReference type="PROSITE" id="PS00490">
    <property type="entry name" value="MOLYBDOPTERIN_PROK_2"/>
    <property type="match status" value="1"/>
</dbReference>
<evidence type="ECO:0000250" key="1"/>
<evidence type="ECO:0000255" key="2">
    <source>
        <dbReference type="PROSITE-ProRule" id="PRU01004"/>
    </source>
</evidence>
<evidence type="ECO:0000269" key="3">
    <source>
    </source>
</evidence>
<evidence type="ECO:0000269" key="4">
    <source>
    </source>
</evidence>
<evidence type="ECO:0000305" key="5"/>
<proteinExistence type="evidence at transcript level"/>
<name>NASC_BACSU</name>
<accession>P42434</accession>